<gene>
    <name evidence="1" type="primary">rsxB</name>
    <name type="synonym">rnfB</name>
    <name type="ordered locus">UTI89_C1818</name>
</gene>
<keyword id="KW-0004">4Fe-4S</keyword>
<keyword id="KW-0997">Cell inner membrane</keyword>
<keyword id="KW-1003">Cell membrane</keyword>
<keyword id="KW-0249">Electron transport</keyword>
<keyword id="KW-0408">Iron</keyword>
<keyword id="KW-0411">Iron-sulfur</keyword>
<keyword id="KW-0472">Membrane</keyword>
<keyword id="KW-0479">Metal-binding</keyword>
<keyword id="KW-0677">Repeat</keyword>
<keyword id="KW-1278">Translocase</keyword>
<keyword id="KW-0813">Transport</keyword>
<proteinExistence type="inferred from homology"/>
<sequence length="192" mass="20544">MNAIWIAVAAVSLLGLAFGAILGYASRRFAVEDDPVVEKIDEILPQSQCGQCGYPGCRPYAEAISCNGEKINRCAPGGEAVMLKIAELLNVEPQPLDGEAQELTPARMVAVIDENNCIGCTKCIQACPVDAIVGATRAMHTVMSDLCTGCNLCVDPCPTHCISLQPVAETPDSWKWDLNTIPVRIIPVEHHA</sequence>
<feature type="chain" id="PRO_1000013643" description="Ion-translocating oxidoreductase complex subunit B">
    <location>
        <begin position="1"/>
        <end position="192"/>
    </location>
</feature>
<feature type="domain" description="4Fe-4S" evidence="1">
    <location>
        <begin position="32"/>
        <end position="91"/>
    </location>
</feature>
<feature type="domain" description="4Fe-4S ferredoxin-type 1" evidence="1">
    <location>
        <begin position="108"/>
        <end position="137"/>
    </location>
</feature>
<feature type="domain" description="4Fe-4S ferredoxin-type 2" evidence="1">
    <location>
        <begin position="138"/>
        <end position="167"/>
    </location>
</feature>
<feature type="region of interest" description="Hydrophobic" evidence="1">
    <location>
        <begin position="1"/>
        <end position="26"/>
    </location>
</feature>
<feature type="binding site" evidence="1">
    <location>
        <position position="49"/>
    </location>
    <ligand>
        <name>[4Fe-4S] cluster</name>
        <dbReference type="ChEBI" id="CHEBI:49883"/>
        <label>1</label>
    </ligand>
</feature>
<feature type="binding site" evidence="1">
    <location>
        <position position="52"/>
    </location>
    <ligand>
        <name>[4Fe-4S] cluster</name>
        <dbReference type="ChEBI" id="CHEBI:49883"/>
        <label>1</label>
    </ligand>
</feature>
<feature type="binding site" evidence="1">
    <location>
        <position position="57"/>
    </location>
    <ligand>
        <name>[4Fe-4S] cluster</name>
        <dbReference type="ChEBI" id="CHEBI:49883"/>
        <label>1</label>
    </ligand>
</feature>
<feature type="binding site" evidence="1">
    <location>
        <position position="74"/>
    </location>
    <ligand>
        <name>[4Fe-4S] cluster</name>
        <dbReference type="ChEBI" id="CHEBI:49883"/>
        <label>1</label>
    </ligand>
</feature>
<feature type="binding site" evidence="1">
    <location>
        <position position="117"/>
    </location>
    <ligand>
        <name>[4Fe-4S] cluster</name>
        <dbReference type="ChEBI" id="CHEBI:49883"/>
        <label>2</label>
    </ligand>
</feature>
<feature type="binding site" evidence="1">
    <location>
        <position position="120"/>
    </location>
    <ligand>
        <name>[4Fe-4S] cluster</name>
        <dbReference type="ChEBI" id="CHEBI:49883"/>
        <label>2</label>
    </ligand>
</feature>
<feature type="binding site" evidence="1">
    <location>
        <position position="123"/>
    </location>
    <ligand>
        <name>[4Fe-4S] cluster</name>
        <dbReference type="ChEBI" id="CHEBI:49883"/>
        <label>2</label>
    </ligand>
</feature>
<feature type="binding site" evidence="1">
    <location>
        <position position="127"/>
    </location>
    <ligand>
        <name>[4Fe-4S] cluster</name>
        <dbReference type="ChEBI" id="CHEBI:49883"/>
        <label>3</label>
    </ligand>
</feature>
<feature type="binding site" evidence="1">
    <location>
        <position position="147"/>
    </location>
    <ligand>
        <name>[4Fe-4S] cluster</name>
        <dbReference type="ChEBI" id="CHEBI:49883"/>
        <label>3</label>
    </ligand>
</feature>
<feature type="binding site" evidence="1">
    <location>
        <position position="150"/>
    </location>
    <ligand>
        <name>[4Fe-4S] cluster</name>
        <dbReference type="ChEBI" id="CHEBI:49883"/>
        <label>3</label>
    </ligand>
</feature>
<feature type="binding site" evidence="1">
    <location>
        <position position="153"/>
    </location>
    <ligand>
        <name>[4Fe-4S] cluster</name>
        <dbReference type="ChEBI" id="CHEBI:49883"/>
        <label>3</label>
    </ligand>
</feature>
<feature type="binding site" evidence="1">
    <location>
        <position position="157"/>
    </location>
    <ligand>
        <name>[4Fe-4S] cluster</name>
        <dbReference type="ChEBI" id="CHEBI:49883"/>
        <label>2</label>
    </ligand>
</feature>
<comment type="function">
    <text evidence="1">Part of a membrane-bound complex that couples electron transfer with translocation of ions across the membrane. Required to maintain the reduced state of SoxR.</text>
</comment>
<comment type="cofactor">
    <cofactor evidence="1">
        <name>[4Fe-4S] cluster</name>
        <dbReference type="ChEBI" id="CHEBI:49883"/>
    </cofactor>
    <text evidence="1">Binds 3 [4Fe-4S] clusters.</text>
</comment>
<comment type="subunit">
    <text evidence="1">The complex is composed of six subunits: RsxA, RsxB, RsxC, RsxD, RsxE and RsxG.</text>
</comment>
<comment type="subcellular location">
    <subcellularLocation>
        <location evidence="1">Cell inner membrane</location>
    </subcellularLocation>
</comment>
<comment type="similarity">
    <text evidence="1">Belongs to the 4Fe4S bacterial-type ferredoxin family. RnfB subfamily.</text>
</comment>
<evidence type="ECO:0000255" key="1">
    <source>
        <dbReference type="HAMAP-Rule" id="MF_00463"/>
    </source>
</evidence>
<accession>Q1RBG8</accession>
<organism>
    <name type="scientific">Escherichia coli (strain UTI89 / UPEC)</name>
    <dbReference type="NCBI Taxonomy" id="364106"/>
    <lineage>
        <taxon>Bacteria</taxon>
        <taxon>Pseudomonadati</taxon>
        <taxon>Pseudomonadota</taxon>
        <taxon>Gammaproteobacteria</taxon>
        <taxon>Enterobacterales</taxon>
        <taxon>Enterobacteriaceae</taxon>
        <taxon>Escherichia</taxon>
    </lineage>
</organism>
<reference key="1">
    <citation type="journal article" date="2006" name="Proc. Natl. Acad. Sci. U.S.A.">
        <title>Identification of genes subject to positive selection in uropathogenic strains of Escherichia coli: a comparative genomics approach.</title>
        <authorList>
            <person name="Chen S.L."/>
            <person name="Hung C.-S."/>
            <person name="Xu J."/>
            <person name="Reigstad C.S."/>
            <person name="Magrini V."/>
            <person name="Sabo A."/>
            <person name="Blasiar D."/>
            <person name="Bieri T."/>
            <person name="Meyer R.R."/>
            <person name="Ozersky P."/>
            <person name="Armstrong J.R."/>
            <person name="Fulton R.S."/>
            <person name="Latreille J.P."/>
            <person name="Spieth J."/>
            <person name="Hooton T.M."/>
            <person name="Mardis E.R."/>
            <person name="Hultgren S.J."/>
            <person name="Gordon J.I."/>
        </authorList>
    </citation>
    <scope>NUCLEOTIDE SEQUENCE [LARGE SCALE GENOMIC DNA]</scope>
    <source>
        <strain>UTI89 / UPEC</strain>
    </source>
</reference>
<name>RSXB_ECOUT</name>
<protein>
    <recommendedName>
        <fullName evidence="1">Ion-translocating oxidoreductase complex subunit B</fullName>
        <ecNumber evidence="1">7.-.-.-</ecNumber>
    </recommendedName>
    <alternativeName>
        <fullName evidence="1">Rsx electron transport complex subunit B</fullName>
    </alternativeName>
</protein>
<dbReference type="EC" id="7.-.-.-" evidence="1"/>
<dbReference type="EMBL" id="CP000243">
    <property type="protein sequence ID" value="ABE07296.1"/>
    <property type="molecule type" value="Genomic_DNA"/>
</dbReference>
<dbReference type="RefSeq" id="WP_000991809.1">
    <property type="nucleotide sequence ID" value="NZ_CP064825.1"/>
</dbReference>
<dbReference type="GeneID" id="93775780"/>
<dbReference type="KEGG" id="eci:UTI89_C1818"/>
<dbReference type="HOGENOM" id="CLU_063448_2_0_6"/>
<dbReference type="Proteomes" id="UP000001952">
    <property type="component" value="Chromosome"/>
</dbReference>
<dbReference type="GO" id="GO:0005886">
    <property type="term" value="C:plasma membrane"/>
    <property type="evidence" value="ECO:0007669"/>
    <property type="project" value="UniProtKB-SubCell"/>
</dbReference>
<dbReference type="GO" id="GO:0051539">
    <property type="term" value="F:4 iron, 4 sulfur cluster binding"/>
    <property type="evidence" value="ECO:0007669"/>
    <property type="project" value="UniProtKB-UniRule"/>
</dbReference>
<dbReference type="GO" id="GO:0009055">
    <property type="term" value="F:electron transfer activity"/>
    <property type="evidence" value="ECO:0007669"/>
    <property type="project" value="InterPro"/>
</dbReference>
<dbReference type="GO" id="GO:0046872">
    <property type="term" value="F:metal ion binding"/>
    <property type="evidence" value="ECO:0007669"/>
    <property type="project" value="UniProtKB-KW"/>
</dbReference>
<dbReference type="GO" id="GO:0022900">
    <property type="term" value="P:electron transport chain"/>
    <property type="evidence" value="ECO:0007669"/>
    <property type="project" value="UniProtKB-UniRule"/>
</dbReference>
<dbReference type="FunFam" id="1.10.15.40:FF:000001">
    <property type="entry name" value="Ion-translocating oxidoreductase complex subunit B"/>
    <property type="match status" value="1"/>
</dbReference>
<dbReference type="Gene3D" id="3.30.70.20">
    <property type="match status" value="1"/>
</dbReference>
<dbReference type="Gene3D" id="1.10.15.40">
    <property type="entry name" value="Electron transport complex subunit B, putative Fe-S cluster"/>
    <property type="match status" value="1"/>
</dbReference>
<dbReference type="HAMAP" id="MF_00463">
    <property type="entry name" value="RsxB_RnfB"/>
    <property type="match status" value="1"/>
</dbReference>
<dbReference type="InterPro" id="IPR007202">
    <property type="entry name" value="4Fe-4S_dom"/>
</dbReference>
<dbReference type="InterPro" id="IPR017896">
    <property type="entry name" value="4Fe4S_Fe-S-bd"/>
</dbReference>
<dbReference type="InterPro" id="IPR017900">
    <property type="entry name" value="4Fe4S_Fe_S_CS"/>
</dbReference>
<dbReference type="InterPro" id="IPR050395">
    <property type="entry name" value="4Fe4S_Ferredoxin_RnfB"/>
</dbReference>
<dbReference type="InterPro" id="IPR010207">
    <property type="entry name" value="Elect_transpt_cplx_RnfB/RsxB"/>
</dbReference>
<dbReference type="InterPro" id="IPR016463">
    <property type="entry name" value="RnfB/RsxB_Proteobac"/>
</dbReference>
<dbReference type="NCBIfam" id="NF003475">
    <property type="entry name" value="PRK05113.1"/>
    <property type="match status" value="1"/>
</dbReference>
<dbReference type="NCBIfam" id="TIGR01944">
    <property type="entry name" value="rnfB"/>
    <property type="match status" value="1"/>
</dbReference>
<dbReference type="PANTHER" id="PTHR43560">
    <property type="entry name" value="ION-TRANSLOCATING OXIDOREDUCTASE COMPLEX SUBUNIT B"/>
    <property type="match status" value="1"/>
</dbReference>
<dbReference type="PANTHER" id="PTHR43560:SF1">
    <property type="entry name" value="ION-TRANSLOCATING OXIDOREDUCTASE COMPLEX SUBUNIT B"/>
    <property type="match status" value="1"/>
</dbReference>
<dbReference type="Pfam" id="PF14697">
    <property type="entry name" value="Fer4_21"/>
    <property type="match status" value="1"/>
</dbReference>
<dbReference type="Pfam" id="PF04060">
    <property type="entry name" value="FeS"/>
    <property type="match status" value="1"/>
</dbReference>
<dbReference type="PIRSF" id="PIRSF005784">
    <property type="entry name" value="Elect_transpt_RnfB"/>
    <property type="match status" value="1"/>
</dbReference>
<dbReference type="SUPFAM" id="SSF54862">
    <property type="entry name" value="4Fe-4S ferredoxins"/>
    <property type="match status" value="1"/>
</dbReference>
<dbReference type="PROSITE" id="PS51656">
    <property type="entry name" value="4FE4S"/>
    <property type="match status" value="1"/>
</dbReference>
<dbReference type="PROSITE" id="PS00198">
    <property type="entry name" value="4FE4S_FER_1"/>
    <property type="match status" value="2"/>
</dbReference>
<dbReference type="PROSITE" id="PS51379">
    <property type="entry name" value="4FE4S_FER_2"/>
    <property type="match status" value="2"/>
</dbReference>